<proteinExistence type="inferred from homology"/>
<name>BAMC_VIBCH</name>
<dbReference type="EMBL" id="AE003852">
    <property type="protein sequence ID" value="AAF95301.1"/>
    <property type="molecule type" value="Genomic_DNA"/>
</dbReference>
<dbReference type="PIR" id="G82113">
    <property type="entry name" value="G82113"/>
</dbReference>
<dbReference type="RefSeq" id="NP_231787.1">
    <property type="nucleotide sequence ID" value="NC_002505.1"/>
</dbReference>
<dbReference type="RefSeq" id="WP_000672772.1">
    <property type="nucleotide sequence ID" value="NZ_LT906614.1"/>
</dbReference>
<dbReference type="SMR" id="Q9KQ48"/>
<dbReference type="STRING" id="243277.VC_2156"/>
<dbReference type="DNASU" id="2613292"/>
<dbReference type="EnsemblBacteria" id="AAF95301">
    <property type="protein sequence ID" value="AAF95301"/>
    <property type="gene ID" value="VC_2156"/>
</dbReference>
<dbReference type="GeneID" id="69719226"/>
<dbReference type="KEGG" id="vch:VC_2156"/>
<dbReference type="PATRIC" id="fig|243277.26.peg.2058"/>
<dbReference type="eggNOG" id="COG3317">
    <property type="taxonomic scope" value="Bacteria"/>
</dbReference>
<dbReference type="HOGENOM" id="CLU_063217_1_0_6"/>
<dbReference type="Proteomes" id="UP000000584">
    <property type="component" value="Chromosome 1"/>
</dbReference>
<dbReference type="GO" id="GO:0009279">
    <property type="term" value="C:cell outer membrane"/>
    <property type="evidence" value="ECO:0007669"/>
    <property type="project" value="UniProtKB-SubCell"/>
</dbReference>
<dbReference type="GO" id="GO:0043165">
    <property type="term" value="P:Gram-negative-bacterium-type cell outer membrane assembly"/>
    <property type="evidence" value="ECO:0007669"/>
    <property type="project" value="UniProtKB-UniRule"/>
</dbReference>
<dbReference type="GO" id="GO:0051205">
    <property type="term" value="P:protein insertion into membrane"/>
    <property type="evidence" value="ECO:0007669"/>
    <property type="project" value="UniProtKB-UniRule"/>
</dbReference>
<dbReference type="Gene3D" id="3.30.530.50">
    <property type="match status" value="1"/>
</dbReference>
<dbReference type="Gene3D" id="3.30.310.170">
    <property type="entry name" value="Outer membrane protein assembly factor BamC"/>
    <property type="match status" value="1"/>
</dbReference>
<dbReference type="HAMAP" id="MF_00924">
    <property type="entry name" value="OM_assembly_BamC"/>
    <property type="match status" value="1"/>
</dbReference>
<dbReference type="InterPro" id="IPR014524">
    <property type="entry name" value="BamC"/>
</dbReference>
<dbReference type="InterPro" id="IPR042268">
    <property type="entry name" value="BamC_C"/>
</dbReference>
<dbReference type="InterPro" id="IPR010653">
    <property type="entry name" value="NlpB/DapX"/>
</dbReference>
<dbReference type="NCBIfam" id="NF008674">
    <property type="entry name" value="PRK11679.1"/>
    <property type="match status" value="1"/>
</dbReference>
<dbReference type="Pfam" id="PF06804">
    <property type="entry name" value="Lipoprotein_18"/>
    <property type="match status" value="1"/>
</dbReference>
<dbReference type="PIRSF" id="PIRSF026343">
    <property type="entry name" value="NlpB"/>
    <property type="match status" value="1"/>
</dbReference>
<dbReference type="PROSITE" id="PS51257">
    <property type="entry name" value="PROKAR_LIPOPROTEIN"/>
    <property type="match status" value="1"/>
</dbReference>
<evidence type="ECO:0000255" key="1">
    <source>
        <dbReference type="HAMAP-Rule" id="MF_00924"/>
    </source>
</evidence>
<protein>
    <recommendedName>
        <fullName evidence="1">Outer membrane protein assembly factor BamC</fullName>
    </recommendedName>
</protein>
<comment type="function">
    <text evidence="1">Part of the outer membrane protein assembly complex, which is involved in assembly and insertion of beta-barrel proteins into the outer membrane.</text>
</comment>
<comment type="subunit">
    <text evidence="1">Part of the Bam complex.</text>
</comment>
<comment type="subcellular location">
    <subcellularLocation>
        <location evidence="1">Cell outer membrane</location>
        <topology evidence="1">Lipid-anchor</topology>
    </subcellularLocation>
</comment>
<comment type="similarity">
    <text evidence="1">Belongs to the BamC family.</text>
</comment>
<organism>
    <name type="scientific">Vibrio cholerae serotype O1 (strain ATCC 39315 / El Tor Inaba N16961)</name>
    <dbReference type="NCBI Taxonomy" id="243277"/>
    <lineage>
        <taxon>Bacteria</taxon>
        <taxon>Pseudomonadati</taxon>
        <taxon>Pseudomonadota</taxon>
        <taxon>Gammaproteobacteria</taxon>
        <taxon>Vibrionales</taxon>
        <taxon>Vibrionaceae</taxon>
        <taxon>Vibrio</taxon>
    </lineage>
</organism>
<feature type="signal peptide" evidence="1">
    <location>
        <begin position="1"/>
        <end position="19"/>
    </location>
</feature>
<feature type="chain" id="PRO_0000417824" description="Outer membrane protein assembly factor BamC">
    <location>
        <begin position="20"/>
        <end position="339"/>
    </location>
</feature>
<feature type="lipid moiety-binding region" description="N-palmitoyl cysteine" evidence="1">
    <location>
        <position position="20"/>
    </location>
</feature>
<feature type="lipid moiety-binding region" description="S-diacylglycerol cysteine" evidence="1">
    <location>
        <position position="20"/>
    </location>
</feature>
<reference key="1">
    <citation type="journal article" date="2000" name="Nature">
        <title>DNA sequence of both chromosomes of the cholera pathogen Vibrio cholerae.</title>
        <authorList>
            <person name="Heidelberg J.F."/>
            <person name="Eisen J.A."/>
            <person name="Nelson W.C."/>
            <person name="Clayton R.A."/>
            <person name="Gwinn M.L."/>
            <person name="Dodson R.J."/>
            <person name="Haft D.H."/>
            <person name="Hickey E.K."/>
            <person name="Peterson J.D."/>
            <person name="Umayam L.A."/>
            <person name="Gill S.R."/>
            <person name="Nelson K.E."/>
            <person name="Read T.D."/>
            <person name="Tettelin H."/>
            <person name="Richardson D.L."/>
            <person name="Ermolaeva M.D."/>
            <person name="Vamathevan J.J."/>
            <person name="Bass S."/>
            <person name="Qin H."/>
            <person name="Dragoi I."/>
            <person name="Sellers P."/>
            <person name="McDonald L.A."/>
            <person name="Utterback T.R."/>
            <person name="Fleischmann R.D."/>
            <person name="Nierman W.C."/>
            <person name="White O."/>
            <person name="Salzberg S.L."/>
            <person name="Smith H.O."/>
            <person name="Colwell R.R."/>
            <person name="Mekalanos J.J."/>
            <person name="Venter J.C."/>
            <person name="Fraser C.M."/>
        </authorList>
    </citation>
    <scope>NUCLEOTIDE SEQUENCE [LARGE SCALE GENOMIC DNA]</scope>
    <source>
        <strain>ATCC 39315 / El Tor Inaba N16961</strain>
    </source>
</reference>
<keyword id="KW-0998">Cell outer membrane</keyword>
<keyword id="KW-0449">Lipoprotein</keyword>
<keyword id="KW-0472">Membrane</keyword>
<keyword id="KW-0564">Palmitate</keyword>
<keyword id="KW-1185">Reference proteome</keyword>
<keyword id="KW-0732">Signal</keyword>
<gene>
    <name evidence="1" type="primary">bamC</name>
    <name type="ordered locus">VC_2156</name>
</gene>
<sequence>MKFSRQLVLGSLAVLVLSACSSSPTQRRQAKDDFDYLETTEFKPWVLPQGATPQFYPNYDIPQGAFHGGVGNVVDIRPPQQVLELIPGARAERQNGEVTLWMLRQDEAQKVWDTALKMIAERKIPLRKQTDSMVETDWVDWVSEDEDVTIGSRYLMSMVETNNRYGFKISLIGWRENGQVQTVSTTNKERYNAFMTNLVTTRYDSDVRAEAARRAQELVKQIPITMGSDRSGFPVIIARTPYDVLWQRLPELLPKMGFTIEERNQSQGTVKAKYAAPDDEFWQQVGVKPIELKSGTYTFLFGDLGNRTSINVTDSAGKPVNEALLKEMVPVLSAVVDKK</sequence>
<accession>Q9KQ48</accession>